<gene>
    <name evidence="1" type="primary">rpl36</name>
</gene>
<name>RK36_PINKO</name>
<organism>
    <name type="scientific">Pinus koraiensis</name>
    <name type="common">Korean pine</name>
    <dbReference type="NCBI Taxonomy" id="88728"/>
    <lineage>
        <taxon>Eukaryota</taxon>
        <taxon>Viridiplantae</taxon>
        <taxon>Streptophyta</taxon>
        <taxon>Embryophyta</taxon>
        <taxon>Tracheophyta</taxon>
        <taxon>Spermatophyta</taxon>
        <taxon>Pinopsida</taxon>
        <taxon>Pinidae</taxon>
        <taxon>Conifers I</taxon>
        <taxon>Pinales</taxon>
        <taxon>Pinaceae</taxon>
        <taxon>Pinus</taxon>
        <taxon>Pinus subgen. Strobus</taxon>
    </lineage>
</organism>
<accession>Q7GUC8</accession>
<keyword id="KW-0150">Chloroplast</keyword>
<keyword id="KW-0934">Plastid</keyword>
<keyword id="KW-0687">Ribonucleoprotein</keyword>
<keyword id="KW-0689">Ribosomal protein</keyword>
<feature type="chain" id="PRO_0000126339" description="Large ribosomal subunit protein bL36c">
    <location>
        <begin position="1"/>
        <end position="37"/>
    </location>
</feature>
<dbReference type="EMBL" id="AY228468">
    <property type="protein sequence ID" value="AAO74069.1"/>
    <property type="molecule type" value="Genomic_DNA"/>
</dbReference>
<dbReference type="RefSeq" id="NP_817221.1">
    <property type="nucleotide sequence ID" value="NC_004677.2"/>
</dbReference>
<dbReference type="SMR" id="Q7GUC8"/>
<dbReference type="GeneID" id="806956"/>
<dbReference type="GO" id="GO:0009507">
    <property type="term" value="C:chloroplast"/>
    <property type="evidence" value="ECO:0007669"/>
    <property type="project" value="UniProtKB-SubCell"/>
</dbReference>
<dbReference type="GO" id="GO:1990904">
    <property type="term" value="C:ribonucleoprotein complex"/>
    <property type="evidence" value="ECO:0007669"/>
    <property type="project" value="UniProtKB-KW"/>
</dbReference>
<dbReference type="GO" id="GO:0005840">
    <property type="term" value="C:ribosome"/>
    <property type="evidence" value="ECO:0007669"/>
    <property type="project" value="UniProtKB-KW"/>
</dbReference>
<dbReference type="GO" id="GO:0003735">
    <property type="term" value="F:structural constituent of ribosome"/>
    <property type="evidence" value="ECO:0007669"/>
    <property type="project" value="InterPro"/>
</dbReference>
<dbReference type="GO" id="GO:0006412">
    <property type="term" value="P:translation"/>
    <property type="evidence" value="ECO:0007669"/>
    <property type="project" value="UniProtKB-UniRule"/>
</dbReference>
<dbReference type="HAMAP" id="MF_00251">
    <property type="entry name" value="Ribosomal_bL36"/>
    <property type="match status" value="1"/>
</dbReference>
<dbReference type="InterPro" id="IPR000473">
    <property type="entry name" value="Ribosomal_bL36"/>
</dbReference>
<dbReference type="InterPro" id="IPR035977">
    <property type="entry name" value="Ribosomal_bL36_sp"/>
</dbReference>
<dbReference type="NCBIfam" id="TIGR01022">
    <property type="entry name" value="rpmJ_bact"/>
    <property type="match status" value="1"/>
</dbReference>
<dbReference type="PANTHER" id="PTHR42888">
    <property type="entry name" value="50S RIBOSOMAL PROTEIN L36, CHLOROPLASTIC"/>
    <property type="match status" value="1"/>
</dbReference>
<dbReference type="PANTHER" id="PTHR42888:SF1">
    <property type="entry name" value="LARGE RIBOSOMAL SUBUNIT PROTEIN BL36C"/>
    <property type="match status" value="1"/>
</dbReference>
<dbReference type="Pfam" id="PF00444">
    <property type="entry name" value="Ribosomal_L36"/>
    <property type="match status" value="1"/>
</dbReference>
<dbReference type="SUPFAM" id="SSF57840">
    <property type="entry name" value="Ribosomal protein L36"/>
    <property type="match status" value="1"/>
</dbReference>
<dbReference type="PROSITE" id="PS00828">
    <property type="entry name" value="RIBOSOMAL_L36"/>
    <property type="match status" value="1"/>
</dbReference>
<sequence>MKIRASIRRICGKCRPIRRRKRVMIICSNPRHKQKQG</sequence>
<evidence type="ECO:0000255" key="1">
    <source>
        <dbReference type="HAMAP-Rule" id="MF_00251"/>
    </source>
</evidence>
<evidence type="ECO:0000305" key="2"/>
<geneLocation type="chloroplast"/>
<proteinExistence type="inferred from homology"/>
<protein>
    <recommendedName>
        <fullName evidence="1">Large ribosomal subunit protein bL36c</fullName>
    </recommendedName>
    <alternativeName>
        <fullName evidence="2">50S ribosomal protein L36, chloroplastic</fullName>
    </alternativeName>
</protein>
<comment type="subcellular location">
    <subcellularLocation>
        <location>Plastid</location>
        <location>Chloroplast</location>
    </subcellularLocation>
</comment>
<comment type="similarity">
    <text evidence="1">Belongs to the bacterial ribosomal protein bL36 family.</text>
</comment>
<reference key="1">
    <citation type="submission" date="2003-02" db="EMBL/GenBank/DDBJ databases">
        <title>Complete nucleotide sequence of Pinus koraiensis.</title>
        <authorList>
            <person name="Noh E.W."/>
            <person name="Lee J.S."/>
            <person name="Choi Y.I."/>
            <person name="Han M.S."/>
            <person name="Yi Y.S."/>
            <person name="Han S.U."/>
        </authorList>
    </citation>
    <scope>NUCLEOTIDE SEQUENCE [LARGE SCALE GENOMIC DNA]</scope>
    <source>
        <strain>KangWon16</strain>
    </source>
</reference>